<sequence length="145" mass="15648">MLKEFKEFAIRGNVIDLAIGIIIGGAFGKIVDSLVKDVIMPPVGMIMGKMDFASLFLNLSGTEYATLAEAKKAGAATLNYGIFISTIVDFLIMAFVVFLMVKQINRMKKEAPAPVAASDSKDCPFCLSPIPLQATRCPHCTSNLK</sequence>
<name>MSCL_PELPD</name>
<reference key="1">
    <citation type="submission" date="2006-10" db="EMBL/GenBank/DDBJ databases">
        <title>Complete sequence of chromosome of Pelobacter propionicus DSM 2379.</title>
        <authorList>
            <consortium name="US DOE Joint Genome Institute"/>
            <person name="Copeland A."/>
            <person name="Lucas S."/>
            <person name="Lapidus A."/>
            <person name="Barry K."/>
            <person name="Detter J.C."/>
            <person name="Glavina del Rio T."/>
            <person name="Hammon N."/>
            <person name="Israni S."/>
            <person name="Dalin E."/>
            <person name="Tice H."/>
            <person name="Pitluck S."/>
            <person name="Saunders E."/>
            <person name="Brettin T."/>
            <person name="Bruce D."/>
            <person name="Han C."/>
            <person name="Tapia R."/>
            <person name="Schmutz J."/>
            <person name="Larimer F."/>
            <person name="Land M."/>
            <person name="Hauser L."/>
            <person name="Kyrpides N."/>
            <person name="Kim E."/>
            <person name="Lovley D."/>
            <person name="Richardson P."/>
        </authorList>
    </citation>
    <scope>NUCLEOTIDE SEQUENCE [LARGE SCALE GENOMIC DNA]</scope>
    <source>
        <strain>DSM 2379 / NBRC 103807 / OttBd1</strain>
    </source>
</reference>
<keyword id="KW-0997">Cell inner membrane</keyword>
<keyword id="KW-1003">Cell membrane</keyword>
<keyword id="KW-0407">Ion channel</keyword>
<keyword id="KW-0406">Ion transport</keyword>
<keyword id="KW-0472">Membrane</keyword>
<keyword id="KW-1185">Reference proteome</keyword>
<keyword id="KW-0812">Transmembrane</keyword>
<keyword id="KW-1133">Transmembrane helix</keyword>
<keyword id="KW-0813">Transport</keyword>
<protein>
    <recommendedName>
        <fullName evidence="1">Large-conductance mechanosensitive channel</fullName>
    </recommendedName>
</protein>
<comment type="function">
    <text evidence="1">Channel that opens in response to stretch forces in the membrane lipid bilayer. May participate in the regulation of osmotic pressure changes within the cell.</text>
</comment>
<comment type="subunit">
    <text evidence="1">Homopentamer.</text>
</comment>
<comment type="subcellular location">
    <subcellularLocation>
        <location evidence="1">Cell inner membrane</location>
        <topology evidence="1">Multi-pass membrane protein</topology>
    </subcellularLocation>
</comment>
<comment type="similarity">
    <text evidence="1">Belongs to the MscL family.</text>
</comment>
<evidence type="ECO:0000255" key="1">
    <source>
        <dbReference type="HAMAP-Rule" id="MF_00115"/>
    </source>
</evidence>
<organism>
    <name type="scientific">Pelobacter propionicus (strain DSM 2379 / NBRC 103807 / OttBd1)</name>
    <dbReference type="NCBI Taxonomy" id="338966"/>
    <lineage>
        <taxon>Bacteria</taxon>
        <taxon>Pseudomonadati</taxon>
        <taxon>Thermodesulfobacteriota</taxon>
        <taxon>Desulfuromonadia</taxon>
        <taxon>Desulfuromonadales</taxon>
        <taxon>Desulfuromonadaceae</taxon>
        <taxon>Pelobacter</taxon>
    </lineage>
</organism>
<accession>A1APN2</accession>
<dbReference type="EMBL" id="CP000482">
    <property type="protein sequence ID" value="ABK99302.1"/>
    <property type="molecule type" value="Genomic_DNA"/>
</dbReference>
<dbReference type="RefSeq" id="WP_011735579.1">
    <property type="nucleotide sequence ID" value="NC_008609.1"/>
</dbReference>
<dbReference type="STRING" id="338966.Ppro_1689"/>
<dbReference type="KEGG" id="ppd:Ppro_1689"/>
<dbReference type="eggNOG" id="COG1970">
    <property type="taxonomic scope" value="Bacteria"/>
</dbReference>
<dbReference type="HOGENOM" id="CLU_095787_2_3_7"/>
<dbReference type="OrthoDB" id="9810350at2"/>
<dbReference type="Proteomes" id="UP000006732">
    <property type="component" value="Chromosome"/>
</dbReference>
<dbReference type="GO" id="GO:0005886">
    <property type="term" value="C:plasma membrane"/>
    <property type="evidence" value="ECO:0007669"/>
    <property type="project" value="UniProtKB-SubCell"/>
</dbReference>
<dbReference type="GO" id="GO:0008381">
    <property type="term" value="F:mechanosensitive monoatomic ion channel activity"/>
    <property type="evidence" value="ECO:0007669"/>
    <property type="project" value="UniProtKB-UniRule"/>
</dbReference>
<dbReference type="Gene3D" id="1.10.1200.120">
    <property type="entry name" value="Large-conductance mechanosensitive channel, MscL, domain 1"/>
    <property type="match status" value="1"/>
</dbReference>
<dbReference type="HAMAP" id="MF_00115">
    <property type="entry name" value="MscL"/>
    <property type="match status" value="1"/>
</dbReference>
<dbReference type="InterPro" id="IPR019823">
    <property type="entry name" value="Mechanosensitive_channel_CS"/>
</dbReference>
<dbReference type="InterPro" id="IPR001185">
    <property type="entry name" value="MS_channel"/>
</dbReference>
<dbReference type="InterPro" id="IPR037673">
    <property type="entry name" value="MSC/AndL"/>
</dbReference>
<dbReference type="InterPro" id="IPR036019">
    <property type="entry name" value="MscL_channel"/>
</dbReference>
<dbReference type="NCBIfam" id="TIGR00220">
    <property type="entry name" value="mscL"/>
    <property type="match status" value="1"/>
</dbReference>
<dbReference type="NCBIfam" id="NF001843">
    <property type="entry name" value="PRK00567.1-4"/>
    <property type="match status" value="1"/>
</dbReference>
<dbReference type="NCBIfam" id="NF010557">
    <property type="entry name" value="PRK13952.1"/>
    <property type="match status" value="1"/>
</dbReference>
<dbReference type="PANTHER" id="PTHR30266:SF2">
    <property type="entry name" value="LARGE-CONDUCTANCE MECHANOSENSITIVE CHANNEL"/>
    <property type="match status" value="1"/>
</dbReference>
<dbReference type="PANTHER" id="PTHR30266">
    <property type="entry name" value="MECHANOSENSITIVE CHANNEL MSCL"/>
    <property type="match status" value="1"/>
</dbReference>
<dbReference type="Pfam" id="PF01741">
    <property type="entry name" value="MscL"/>
    <property type="match status" value="1"/>
</dbReference>
<dbReference type="PRINTS" id="PR01264">
    <property type="entry name" value="MECHCHANNEL"/>
</dbReference>
<dbReference type="SUPFAM" id="SSF81330">
    <property type="entry name" value="Gated mechanosensitive channel"/>
    <property type="match status" value="1"/>
</dbReference>
<dbReference type="PROSITE" id="PS01327">
    <property type="entry name" value="MSCL"/>
    <property type="match status" value="1"/>
</dbReference>
<proteinExistence type="inferred from homology"/>
<gene>
    <name evidence="1" type="primary">mscL</name>
    <name type="ordered locus">Ppro_1689</name>
</gene>
<feature type="chain" id="PRO_1000015407" description="Large-conductance mechanosensitive channel">
    <location>
        <begin position="1"/>
        <end position="145"/>
    </location>
</feature>
<feature type="transmembrane region" description="Helical" evidence="1">
    <location>
        <begin position="14"/>
        <end position="34"/>
    </location>
</feature>
<feature type="transmembrane region" description="Helical" evidence="1">
    <location>
        <begin position="81"/>
        <end position="101"/>
    </location>
</feature>